<organism>
    <name type="scientific">Shigella flexneri serotype 5b (strain 8401)</name>
    <dbReference type="NCBI Taxonomy" id="373384"/>
    <lineage>
        <taxon>Bacteria</taxon>
        <taxon>Pseudomonadati</taxon>
        <taxon>Pseudomonadota</taxon>
        <taxon>Gammaproteobacteria</taxon>
        <taxon>Enterobacterales</taxon>
        <taxon>Enterobacteriaceae</taxon>
        <taxon>Shigella</taxon>
    </lineage>
</organism>
<evidence type="ECO:0000255" key="1">
    <source>
        <dbReference type="HAMAP-Rule" id="MF_00599"/>
    </source>
</evidence>
<accession>Q0T1H9</accession>
<sequence>MGKLTLLLLAILVWLQYSLWFGKNGIHDYTRVNDDVAALQATNAKLKARNDQLFAEIDDLNGGQEALEERARNELSMTRPGETFYRLVPDASKRAQSAGQNNR</sequence>
<reference key="1">
    <citation type="journal article" date="2006" name="BMC Genomics">
        <title>Complete genome sequence of Shigella flexneri 5b and comparison with Shigella flexneri 2a.</title>
        <authorList>
            <person name="Nie H."/>
            <person name="Yang F."/>
            <person name="Zhang X."/>
            <person name="Yang J."/>
            <person name="Chen L."/>
            <person name="Wang J."/>
            <person name="Xiong Z."/>
            <person name="Peng J."/>
            <person name="Sun L."/>
            <person name="Dong J."/>
            <person name="Xue Y."/>
            <person name="Xu X."/>
            <person name="Chen S."/>
            <person name="Yao Z."/>
            <person name="Shen Y."/>
            <person name="Jin Q."/>
        </authorList>
    </citation>
    <scope>NUCLEOTIDE SEQUENCE [LARGE SCALE GENOMIC DNA]</scope>
    <source>
        <strain>8401</strain>
    </source>
</reference>
<proteinExistence type="inferred from homology"/>
<name>FTSB_SHIF8</name>
<gene>
    <name evidence="1" type="primary">ftsB</name>
    <name type="ordered locus">SFV_2750</name>
</gene>
<dbReference type="EMBL" id="CP000266">
    <property type="protein sequence ID" value="ABF04836.1"/>
    <property type="molecule type" value="Genomic_DNA"/>
</dbReference>
<dbReference type="RefSeq" id="WP_000517472.1">
    <property type="nucleotide sequence ID" value="NC_008258.1"/>
</dbReference>
<dbReference type="SMR" id="Q0T1H9"/>
<dbReference type="KEGG" id="sfv:SFV_2750"/>
<dbReference type="HOGENOM" id="CLU_134863_5_2_6"/>
<dbReference type="Proteomes" id="UP000000659">
    <property type="component" value="Chromosome"/>
</dbReference>
<dbReference type="GO" id="GO:0032153">
    <property type="term" value="C:cell division site"/>
    <property type="evidence" value="ECO:0007669"/>
    <property type="project" value="UniProtKB-UniRule"/>
</dbReference>
<dbReference type="GO" id="GO:0030428">
    <property type="term" value="C:cell septum"/>
    <property type="evidence" value="ECO:0007669"/>
    <property type="project" value="TreeGrafter"/>
</dbReference>
<dbReference type="GO" id="GO:0005886">
    <property type="term" value="C:plasma membrane"/>
    <property type="evidence" value="ECO:0007669"/>
    <property type="project" value="UniProtKB-SubCell"/>
</dbReference>
<dbReference type="GO" id="GO:0043093">
    <property type="term" value="P:FtsZ-dependent cytokinesis"/>
    <property type="evidence" value="ECO:0007669"/>
    <property type="project" value="UniProtKB-UniRule"/>
</dbReference>
<dbReference type="FunFam" id="1.20.5.400:FF:000001">
    <property type="entry name" value="Cell division protein FtsB"/>
    <property type="match status" value="1"/>
</dbReference>
<dbReference type="Gene3D" id="1.20.5.400">
    <property type="match status" value="1"/>
</dbReference>
<dbReference type="HAMAP" id="MF_00599">
    <property type="entry name" value="FtsB"/>
    <property type="match status" value="1"/>
</dbReference>
<dbReference type="InterPro" id="IPR023081">
    <property type="entry name" value="Cell_div_FtsB"/>
</dbReference>
<dbReference type="InterPro" id="IPR007060">
    <property type="entry name" value="FtsL/DivIC"/>
</dbReference>
<dbReference type="NCBIfam" id="NF002058">
    <property type="entry name" value="PRK00888.1"/>
    <property type="match status" value="1"/>
</dbReference>
<dbReference type="PANTHER" id="PTHR37485">
    <property type="entry name" value="CELL DIVISION PROTEIN FTSB"/>
    <property type="match status" value="1"/>
</dbReference>
<dbReference type="PANTHER" id="PTHR37485:SF1">
    <property type="entry name" value="CELL DIVISION PROTEIN FTSB"/>
    <property type="match status" value="1"/>
</dbReference>
<dbReference type="Pfam" id="PF04977">
    <property type="entry name" value="DivIC"/>
    <property type="match status" value="1"/>
</dbReference>
<keyword id="KW-0131">Cell cycle</keyword>
<keyword id="KW-0132">Cell division</keyword>
<keyword id="KW-0997">Cell inner membrane</keyword>
<keyword id="KW-1003">Cell membrane</keyword>
<keyword id="KW-0175">Coiled coil</keyword>
<keyword id="KW-0472">Membrane</keyword>
<keyword id="KW-0812">Transmembrane</keyword>
<keyword id="KW-1133">Transmembrane helix</keyword>
<feature type="chain" id="PRO_1000025729" description="Cell division protein FtsB">
    <location>
        <begin position="1"/>
        <end position="103"/>
    </location>
</feature>
<feature type="topological domain" description="Cytoplasmic" evidence="1">
    <location>
        <begin position="1"/>
        <end position="3"/>
    </location>
</feature>
<feature type="transmembrane region" description="Helical" evidence="1">
    <location>
        <begin position="4"/>
        <end position="21"/>
    </location>
</feature>
<feature type="topological domain" description="Periplasmic" evidence="1">
    <location>
        <begin position="22"/>
        <end position="103"/>
    </location>
</feature>
<feature type="coiled-coil region" evidence="1">
    <location>
        <begin position="28"/>
        <end position="71"/>
    </location>
</feature>
<protein>
    <recommendedName>
        <fullName evidence="1">Cell division protein FtsB</fullName>
    </recommendedName>
</protein>
<comment type="function">
    <text evidence="1">Essential cell division protein. May link together the upstream cell division proteins, which are predominantly cytoplasmic, with the downstream cell division proteins, which are predominantly periplasmic.</text>
</comment>
<comment type="subunit">
    <text evidence="1">Part of a complex composed of FtsB, FtsL and FtsQ.</text>
</comment>
<comment type="subcellular location">
    <subcellularLocation>
        <location evidence="1">Cell inner membrane</location>
        <topology evidence="1">Single-pass type II membrane protein</topology>
    </subcellularLocation>
    <text evidence="1">Localizes to the division septum.</text>
</comment>
<comment type="similarity">
    <text evidence="1">Belongs to the FtsB family.</text>
</comment>